<sequence>MDIKKGDLVLVISGKDKGKRGKVISVLPSEEKVIVEGVNIVKKHTRPNAKMRQGGIIEKPAPLYRCKVMLICPHCNQPTRIKHTFLEDGRKVRVCSKCKEIIDRV</sequence>
<reference key="1">
    <citation type="journal article" date="2014" name="Genome Announc.">
        <title>Complete Genome Sequence of the Extreme Thermophile Dictyoglomus thermophilum H-6-12.</title>
        <authorList>
            <person name="Coil D.A."/>
            <person name="Badger J.H."/>
            <person name="Forberger H.C."/>
            <person name="Riggs F."/>
            <person name="Madupu R."/>
            <person name="Fedorova N."/>
            <person name="Ward N."/>
            <person name="Robb F.T."/>
            <person name="Eisen J.A."/>
        </authorList>
    </citation>
    <scope>NUCLEOTIDE SEQUENCE [LARGE SCALE GENOMIC DNA]</scope>
    <source>
        <strain>ATCC 35947 / DSM 3960 / H-6-12</strain>
    </source>
</reference>
<proteinExistence type="inferred from homology"/>
<protein>
    <recommendedName>
        <fullName evidence="1">Large ribosomal subunit protein uL24</fullName>
    </recommendedName>
    <alternativeName>
        <fullName evidence="2">50S ribosomal protein L24</fullName>
    </alternativeName>
</protein>
<keyword id="KW-0687">Ribonucleoprotein</keyword>
<keyword id="KW-0689">Ribosomal protein</keyword>
<keyword id="KW-0694">RNA-binding</keyword>
<keyword id="KW-0699">rRNA-binding</keyword>
<comment type="function">
    <text evidence="1">One of two assembly initiator proteins, it binds directly to the 5'-end of the 23S rRNA, where it nucleates assembly of the 50S subunit.</text>
</comment>
<comment type="function">
    <text evidence="1">One of the proteins that surrounds the polypeptide exit tunnel on the outside of the subunit.</text>
</comment>
<comment type="subunit">
    <text evidence="1">Part of the 50S ribosomal subunit.</text>
</comment>
<comment type="similarity">
    <text evidence="1">Belongs to the universal ribosomal protein uL24 family.</text>
</comment>
<name>RL24_DICT6</name>
<gene>
    <name evidence="1" type="primary">rplX</name>
    <name type="ordered locus">DICTH_0848</name>
</gene>
<accession>B5YDV4</accession>
<feature type="chain" id="PRO_1000165941" description="Large ribosomal subunit protein uL24">
    <location>
        <begin position="1"/>
        <end position="105"/>
    </location>
</feature>
<organism>
    <name type="scientific">Dictyoglomus thermophilum (strain ATCC 35947 / DSM 3960 / H-6-12)</name>
    <dbReference type="NCBI Taxonomy" id="309799"/>
    <lineage>
        <taxon>Bacteria</taxon>
        <taxon>Pseudomonadati</taxon>
        <taxon>Dictyoglomota</taxon>
        <taxon>Dictyoglomia</taxon>
        <taxon>Dictyoglomales</taxon>
        <taxon>Dictyoglomaceae</taxon>
        <taxon>Dictyoglomus</taxon>
    </lineage>
</organism>
<evidence type="ECO:0000255" key="1">
    <source>
        <dbReference type="HAMAP-Rule" id="MF_01326"/>
    </source>
</evidence>
<evidence type="ECO:0000305" key="2"/>
<dbReference type="EMBL" id="CP001146">
    <property type="protein sequence ID" value="ACI18715.1"/>
    <property type="molecule type" value="Genomic_DNA"/>
</dbReference>
<dbReference type="RefSeq" id="WP_012547347.1">
    <property type="nucleotide sequence ID" value="NC_011297.1"/>
</dbReference>
<dbReference type="SMR" id="B5YDV4"/>
<dbReference type="STRING" id="309799.DICTH_0848"/>
<dbReference type="PaxDb" id="309799-DICTH_0848"/>
<dbReference type="KEGG" id="dth:DICTH_0848"/>
<dbReference type="eggNOG" id="COG0198">
    <property type="taxonomic scope" value="Bacteria"/>
</dbReference>
<dbReference type="HOGENOM" id="CLU_093315_2_0_0"/>
<dbReference type="OrthoDB" id="9807419at2"/>
<dbReference type="Proteomes" id="UP000001733">
    <property type="component" value="Chromosome"/>
</dbReference>
<dbReference type="GO" id="GO:1990904">
    <property type="term" value="C:ribonucleoprotein complex"/>
    <property type="evidence" value="ECO:0007669"/>
    <property type="project" value="UniProtKB-KW"/>
</dbReference>
<dbReference type="GO" id="GO:0005840">
    <property type="term" value="C:ribosome"/>
    <property type="evidence" value="ECO:0007669"/>
    <property type="project" value="UniProtKB-KW"/>
</dbReference>
<dbReference type="GO" id="GO:0019843">
    <property type="term" value="F:rRNA binding"/>
    <property type="evidence" value="ECO:0007669"/>
    <property type="project" value="UniProtKB-UniRule"/>
</dbReference>
<dbReference type="GO" id="GO:0003735">
    <property type="term" value="F:structural constituent of ribosome"/>
    <property type="evidence" value="ECO:0007669"/>
    <property type="project" value="InterPro"/>
</dbReference>
<dbReference type="GO" id="GO:0006412">
    <property type="term" value="P:translation"/>
    <property type="evidence" value="ECO:0007669"/>
    <property type="project" value="UniProtKB-UniRule"/>
</dbReference>
<dbReference type="CDD" id="cd06089">
    <property type="entry name" value="KOW_RPL26"/>
    <property type="match status" value="1"/>
</dbReference>
<dbReference type="FunFam" id="2.30.30.30:FF:000004">
    <property type="entry name" value="50S ribosomal protein L24"/>
    <property type="match status" value="1"/>
</dbReference>
<dbReference type="Gene3D" id="2.30.30.30">
    <property type="match status" value="1"/>
</dbReference>
<dbReference type="HAMAP" id="MF_01326_B">
    <property type="entry name" value="Ribosomal_uL24_B"/>
    <property type="match status" value="1"/>
</dbReference>
<dbReference type="InterPro" id="IPR005824">
    <property type="entry name" value="KOW"/>
</dbReference>
<dbReference type="InterPro" id="IPR014722">
    <property type="entry name" value="Rib_uL2_dom2"/>
</dbReference>
<dbReference type="InterPro" id="IPR003256">
    <property type="entry name" value="Ribosomal_uL24"/>
</dbReference>
<dbReference type="InterPro" id="IPR005825">
    <property type="entry name" value="Ribosomal_uL24_CS"/>
</dbReference>
<dbReference type="InterPro" id="IPR041988">
    <property type="entry name" value="Ribosomal_uL24_KOW"/>
</dbReference>
<dbReference type="InterPro" id="IPR008991">
    <property type="entry name" value="Translation_prot_SH3-like_sf"/>
</dbReference>
<dbReference type="NCBIfam" id="TIGR01079">
    <property type="entry name" value="rplX_bact"/>
    <property type="match status" value="1"/>
</dbReference>
<dbReference type="PANTHER" id="PTHR12903">
    <property type="entry name" value="MITOCHONDRIAL RIBOSOMAL PROTEIN L24"/>
    <property type="match status" value="1"/>
</dbReference>
<dbReference type="Pfam" id="PF00467">
    <property type="entry name" value="KOW"/>
    <property type="match status" value="1"/>
</dbReference>
<dbReference type="Pfam" id="PF17136">
    <property type="entry name" value="ribosomal_L24"/>
    <property type="match status" value="1"/>
</dbReference>
<dbReference type="SMART" id="SM00739">
    <property type="entry name" value="KOW"/>
    <property type="match status" value="1"/>
</dbReference>
<dbReference type="SUPFAM" id="SSF50104">
    <property type="entry name" value="Translation proteins SH3-like domain"/>
    <property type="match status" value="1"/>
</dbReference>
<dbReference type="PROSITE" id="PS01108">
    <property type="entry name" value="RIBOSOMAL_L24"/>
    <property type="match status" value="1"/>
</dbReference>